<accession>Q09300</accession>
<organism>
    <name type="scientific">Caenorhabditis elegans</name>
    <dbReference type="NCBI Taxonomy" id="6239"/>
    <lineage>
        <taxon>Eukaryota</taxon>
        <taxon>Metazoa</taxon>
        <taxon>Ecdysozoa</taxon>
        <taxon>Nematoda</taxon>
        <taxon>Chromadorea</taxon>
        <taxon>Rhabditida</taxon>
        <taxon>Rhabditina</taxon>
        <taxon>Rhabditomorpha</taxon>
        <taxon>Rhabditoidea</taxon>
        <taxon>Rhabditidae</taxon>
        <taxon>Peloderinae</taxon>
        <taxon>Caenorhabditis</taxon>
    </lineage>
</organism>
<gene>
    <name type="primary">clec-141</name>
    <name type="ORF">EEED8.11</name>
</gene>
<sequence length="304" mass="32983">MRSSSTLLIAFGLFLASMSVEAIIRPGYGSGGHRPPSSYHGGHHNDDDCTTKPPKSTSTPSTSTSTPTTTTTTTTTTTTTPTTTTTTTTTTTPEPTTTKVKVCPQGYTSFLRTPAADNSFTSEWCMQLIWSPRQPMPINNASALCQASNTEAVVTTFANEEELNVFSLQMAQQFDRVGPATRGAIAVDGRRIAACVSRDRGILDSEECNGTNSFVMVDKHTSPGFTWSKWATNEPSANAWTYDIEQCIQFTVYPALTGPGDNPYNMLNRNNKFNDIYCNMDKAPNEPTNTAYWNFGALCGVLPS</sequence>
<feature type="signal peptide" evidence="1">
    <location>
        <begin position="1"/>
        <end position="19"/>
    </location>
</feature>
<feature type="chain" id="PRO_0000014279" description="C-type lectin domain-containing protein 141">
    <location>
        <begin position="20"/>
        <end position="304"/>
    </location>
</feature>
<feature type="region of interest" description="Disordered" evidence="2">
    <location>
        <begin position="29"/>
        <end position="100"/>
    </location>
</feature>
<feature type="compositionally biased region" description="Low complexity" evidence="2">
    <location>
        <begin position="51"/>
        <end position="99"/>
    </location>
</feature>
<dbReference type="EMBL" id="FO081042">
    <property type="protein sequence ID" value="CCD68739.1"/>
    <property type="molecule type" value="Genomic_DNA"/>
</dbReference>
<dbReference type="PIR" id="T15922">
    <property type="entry name" value="T15922"/>
</dbReference>
<dbReference type="RefSeq" id="NP_495020.1">
    <property type="nucleotide sequence ID" value="NM_062619.4"/>
</dbReference>
<dbReference type="SMR" id="Q09300"/>
<dbReference type="FunCoup" id="Q09300">
    <property type="interactions" value="1522"/>
</dbReference>
<dbReference type="PaxDb" id="6239-EEED8.11"/>
<dbReference type="EnsemblMetazoa" id="EEED8.11.1">
    <property type="protein sequence ID" value="EEED8.11.1"/>
    <property type="gene ID" value="WBGene00017139"/>
</dbReference>
<dbReference type="GeneID" id="184044"/>
<dbReference type="KEGG" id="cel:CELE_EEED8.11"/>
<dbReference type="AGR" id="WB:WBGene00017139"/>
<dbReference type="CTD" id="184044"/>
<dbReference type="WormBase" id="EEED8.11">
    <property type="protein sequence ID" value="CE01884"/>
    <property type="gene ID" value="WBGene00017139"/>
    <property type="gene designation" value="clec-141"/>
</dbReference>
<dbReference type="eggNOG" id="KOG4297">
    <property type="taxonomic scope" value="Eukaryota"/>
</dbReference>
<dbReference type="GeneTree" id="ENSGT00970000196481"/>
<dbReference type="HOGENOM" id="CLU_079716_0_0_1"/>
<dbReference type="InParanoid" id="Q09300"/>
<dbReference type="OMA" id="NDIYCNM"/>
<dbReference type="OrthoDB" id="5871463at2759"/>
<dbReference type="PhylomeDB" id="Q09300"/>
<dbReference type="PRO" id="PR:Q09300"/>
<dbReference type="Proteomes" id="UP000001940">
    <property type="component" value="Chromosome II"/>
</dbReference>
<dbReference type="Bgee" id="WBGene00017139">
    <property type="expression patterns" value="Expressed in adult organism"/>
</dbReference>
<dbReference type="Gene3D" id="3.10.100.10">
    <property type="entry name" value="Mannose-Binding Protein A, subunit A"/>
    <property type="match status" value="1"/>
</dbReference>
<dbReference type="InterPro" id="IPR016186">
    <property type="entry name" value="C-type_lectin-like/link_sf"/>
</dbReference>
<dbReference type="InterPro" id="IPR016187">
    <property type="entry name" value="CTDL_fold"/>
</dbReference>
<dbReference type="PANTHER" id="PTHR23124:SF143">
    <property type="entry name" value="C-TYPE LECTIN DOMAIN-CONTAINING PROTEIN 141"/>
    <property type="match status" value="1"/>
</dbReference>
<dbReference type="PANTHER" id="PTHR23124">
    <property type="entry name" value="C-TYPE LECTIN DOMAIN-CONTAINING PROTEIN-RELATED-RELATED"/>
    <property type="match status" value="1"/>
</dbReference>
<dbReference type="SUPFAM" id="SSF56436">
    <property type="entry name" value="C-type lectin-like"/>
    <property type="match status" value="1"/>
</dbReference>
<protein>
    <recommendedName>
        <fullName>C-type lectin domain-containing protein 141</fullName>
    </recommendedName>
</protein>
<name>CL141_CAEEL</name>
<keyword id="KW-1185">Reference proteome</keyword>
<keyword id="KW-0732">Signal</keyword>
<reference key="1">
    <citation type="journal article" date="1998" name="Science">
        <title>Genome sequence of the nematode C. elegans: a platform for investigating biology.</title>
        <authorList>
            <consortium name="The C. elegans sequencing consortium"/>
        </authorList>
    </citation>
    <scope>NUCLEOTIDE SEQUENCE [LARGE SCALE GENOMIC DNA]</scope>
    <source>
        <strain>Bristol N2</strain>
    </source>
</reference>
<evidence type="ECO:0000255" key="1"/>
<evidence type="ECO:0000256" key="2">
    <source>
        <dbReference type="SAM" id="MobiDB-lite"/>
    </source>
</evidence>
<proteinExistence type="inferred from homology"/>